<accession>Q92F44</accession>
<protein>
    <recommendedName>
        <fullName evidence="1">Protein-arginine kinase</fullName>
        <ecNumber evidence="1">2.7.14.1</ecNumber>
    </recommendedName>
</protein>
<gene>
    <name evidence="1" type="primary">mcsB</name>
    <name type="ordered locus">lin0263</name>
</gene>
<proteinExistence type="inferred from homology"/>
<dbReference type="EC" id="2.7.14.1" evidence="1"/>
<dbReference type="EMBL" id="AL596164">
    <property type="protein sequence ID" value="CAC95496.1"/>
    <property type="molecule type" value="Genomic_DNA"/>
</dbReference>
<dbReference type="PIR" id="AH1465">
    <property type="entry name" value="AH1465"/>
</dbReference>
<dbReference type="RefSeq" id="WP_010990301.1">
    <property type="nucleotide sequence ID" value="NC_003212.1"/>
</dbReference>
<dbReference type="SMR" id="Q92F44"/>
<dbReference type="STRING" id="272626.gene:17564590"/>
<dbReference type="GeneID" id="93233713"/>
<dbReference type="KEGG" id="lin:lin0263"/>
<dbReference type="eggNOG" id="COG3869">
    <property type="taxonomic scope" value="Bacteria"/>
</dbReference>
<dbReference type="HOGENOM" id="CLU_066591_1_0_9"/>
<dbReference type="OrthoDB" id="9791353at2"/>
<dbReference type="Proteomes" id="UP000002513">
    <property type="component" value="Chromosome"/>
</dbReference>
<dbReference type="GO" id="GO:0005615">
    <property type="term" value="C:extracellular space"/>
    <property type="evidence" value="ECO:0007669"/>
    <property type="project" value="TreeGrafter"/>
</dbReference>
<dbReference type="GO" id="GO:0005524">
    <property type="term" value="F:ATP binding"/>
    <property type="evidence" value="ECO:0007669"/>
    <property type="project" value="UniProtKB-KW"/>
</dbReference>
<dbReference type="GO" id="GO:0004111">
    <property type="term" value="F:creatine kinase activity"/>
    <property type="evidence" value="ECO:0007669"/>
    <property type="project" value="InterPro"/>
</dbReference>
<dbReference type="GO" id="GO:0004672">
    <property type="term" value="F:protein kinase activity"/>
    <property type="evidence" value="ECO:0007669"/>
    <property type="project" value="UniProtKB-UniRule"/>
</dbReference>
<dbReference type="GO" id="GO:0046314">
    <property type="term" value="P:phosphocreatine biosynthetic process"/>
    <property type="evidence" value="ECO:0007669"/>
    <property type="project" value="InterPro"/>
</dbReference>
<dbReference type="CDD" id="cd07930">
    <property type="entry name" value="bacterial_phosphagen_kinase"/>
    <property type="match status" value="1"/>
</dbReference>
<dbReference type="FunFam" id="3.30.590.10:FF:000007">
    <property type="entry name" value="Protein-arginine kinase"/>
    <property type="match status" value="1"/>
</dbReference>
<dbReference type="Gene3D" id="3.30.590.10">
    <property type="entry name" value="Glutamine synthetase/guanido kinase, catalytic domain"/>
    <property type="match status" value="1"/>
</dbReference>
<dbReference type="HAMAP" id="MF_00602">
    <property type="entry name" value="Prot_Arg_kinase"/>
    <property type="match status" value="1"/>
</dbReference>
<dbReference type="InterPro" id="IPR023660">
    <property type="entry name" value="Arg_Kinase"/>
</dbReference>
<dbReference type="InterPro" id="IPR000749">
    <property type="entry name" value="ATP-guanido_PTrfase"/>
</dbReference>
<dbReference type="InterPro" id="IPR022414">
    <property type="entry name" value="ATP-guanido_PTrfase_cat"/>
</dbReference>
<dbReference type="InterPro" id="IPR014746">
    <property type="entry name" value="Gln_synth/guanido_kin_cat_dom"/>
</dbReference>
<dbReference type="NCBIfam" id="NF002192">
    <property type="entry name" value="PRK01059.1-2"/>
    <property type="match status" value="1"/>
</dbReference>
<dbReference type="NCBIfam" id="NF002194">
    <property type="entry name" value="PRK01059.1-4"/>
    <property type="match status" value="1"/>
</dbReference>
<dbReference type="PANTHER" id="PTHR11547:SF38">
    <property type="entry name" value="ARGININE KINASE 1-RELATED"/>
    <property type="match status" value="1"/>
</dbReference>
<dbReference type="PANTHER" id="PTHR11547">
    <property type="entry name" value="ARGININE OR CREATINE KINASE"/>
    <property type="match status" value="1"/>
</dbReference>
<dbReference type="Pfam" id="PF00217">
    <property type="entry name" value="ATP-gua_Ptrans"/>
    <property type="match status" value="1"/>
</dbReference>
<dbReference type="SUPFAM" id="SSF55931">
    <property type="entry name" value="Glutamine synthetase/guanido kinase"/>
    <property type="match status" value="1"/>
</dbReference>
<dbReference type="PROSITE" id="PS51510">
    <property type="entry name" value="PHOSPHAGEN_KINASE_C"/>
    <property type="match status" value="1"/>
</dbReference>
<feature type="chain" id="PRO_0000212024" description="Protein-arginine kinase">
    <location>
        <begin position="1"/>
        <end position="340"/>
    </location>
</feature>
<feature type="domain" description="Phosphagen kinase C-terminal" evidence="1">
    <location>
        <begin position="21"/>
        <end position="242"/>
    </location>
</feature>
<feature type="binding site" evidence="1">
    <location>
        <begin position="24"/>
        <end position="28"/>
    </location>
    <ligand>
        <name>ATP</name>
        <dbReference type="ChEBI" id="CHEBI:30616"/>
    </ligand>
</feature>
<feature type="binding site" evidence="1">
    <location>
        <position position="79"/>
    </location>
    <ligand>
        <name>ATP</name>
        <dbReference type="ChEBI" id="CHEBI:30616"/>
    </ligand>
</feature>
<feature type="binding site" evidence="1">
    <location>
        <position position="113"/>
    </location>
    <ligand>
        <name>ATP</name>
        <dbReference type="ChEBI" id="CHEBI:30616"/>
    </ligand>
</feature>
<feature type="binding site" evidence="1">
    <location>
        <begin position="164"/>
        <end position="168"/>
    </location>
    <ligand>
        <name>ATP</name>
        <dbReference type="ChEBI" id="CHEBI:30616"/>
    </ligand>
</feature>
<feature type="binding site" evidence="1">
    <location>
        <begin position="195"/>
        <end position="200"/>
    </location>
    <ligand>
        <name>ATP</name>
        <dbReference type="ChEBI" id="CHEBI:30616"/>
    </ligand>
</feature>
<keyword id="KW-0067">ATP-binding</keyword>
<keyword id="KW-0418">Kinase</keyword>
<keyword id="KW-0547">Nucleotide-binding</keyword>
<keyword id="KW-0808">Transferase</keyword>
<evidence type="ECO:0000255" key="1">
    <source>
        <dbReference type="HAMAP-Rule" id="MF_00602"/>
    </source>
</evidence>
<name>MCSB_LISIN</name>
<reference key="1">
    <citation type="journal article" date="2001" name="Science">
        <title>Comparative genomics of Listeria species.</title>
        <authorList>
            <person name="Glaser P."/>
            <person name="Frangeul L."/>
            <person name="Buchrieser C."/>
            <person name="Rusniok C."/>
            <person name="Amend A."/>
            <person name="Baquero F."/>
            <person name="Berche P."/>
            <person name="Bloecker H."/>
            <person name="Brandt P."/>
            <person name="Chakraborty T."/>
            <person name="Charbit A."/>
            <person name="Chetouani F."/>
            <person name="Couve E."/>
            <person name="de Daruvar A."/>
            <person name="Dehoux P."/>
            <person name="Domann E."/>
            <person name="Dominguez-Bernal G."/>
            <person name="Duchaud E."/>
            <person name="Durant L."/>
            <person name="Dussurget O."/>
            <person name="Entian K.-D."/>
            <person name="Fsihi H."/>
            <person name="Garcia-del Portillo F."/>
            <person name="Garrido P."/>
            <person name="Gautier L."/>
            <person name="Goebel W."/>
            <person name="Gomez-Lopez N."/>
            <person name="Hain T."/>
            <person name="Hauf J."/>
            <person name="Jackson D."/>
            <person name="Jones L.-M."/>
            <person name="Kaerst U."/>
            <person name="Kreft J."/>
            <person name="Kuhn M."/>
            <person name="Kunst F."/>
            <person name="Kurapkat G."/>
            <person name="Madueno E."/>
            <person name="Maitournam A."/>
            <person name="Mata Vicente J."/>
            <person name="Ng E."/>
            <person name="Nedjari H."/>
            <person name="Nordsiek G."/>
            <person name="Novella S."/>
            <person name="de Pablos B."/>
            <person name="Perez-Diaz J.-C."/>
            <person name="Purcell R."/>
            <person name="Remmel B."/>
            <person name="Rose M."/>
            <person name="Schlueter T."/>
            <person name="Simoes N."/>
            <person name="Tierrez A."/>
            <person name="Vazquez-Boland J.-A."/>
            <person name="Voss H."/>
            <person name="Wehland J."/>
            <person name="Cossart P."/>
        </authorList>
    </citation>
    <scope>NUCLEOTIDE SEQUENCE [LARGE SCALE GENOMIC DNA]</scope>
    <source>
        <strain>ATCC BAA-680 / CLIP 11262</strain>
    </source>
</reference>
<comment type="function">
    <text evidence="1">Catalyzes the specific phosphorylation of arginine residues in proteins.</text>
</comment>
<comment type="catalytic activity">
    <reaction evidence="1">
        <text>L-arginyl-[protein] + ATP = N(omega)-phospho-L-arginyl-[protein] + ADP + H(+)</text>
        <dbReference type="Rhea" id="RHEA:43384"/>
        <dbReference type="Rhea" id="RHEA-COMP:10532"/>
        <dbReference type="Rhea" id="RHEA-COMP:10533"/>
        <dbReference type="ChEBI" id="CHEBI:15378"/>
        <dbReference type="ChEBI" id="CHEBI:29965"/>
        <dbReference type="ChEBI" id="CHEBI:30616"/>
        <dbReference type="ChEBI" id="CHEBI:83226"/>
        <dbReference type="ChEBI" id="CHEBI:456216"/>
        <dbReference type="EC" id="2.7.14.1"/>
    </reaction>
</comment>
<comment type="similarity">
    <text evidence="1">Belongs to the ATP:guanido phosphotransferase family.</text>
</comment>
<organism>
    <name type="scientific">Listeria innocua serovar 6a (strain ATCC BAA-680 / CLIP 11262)</name>
    <dbReference type="NCBI Taxonomy" id="272626"/>
    <lineage>
        <taxon>Bacteria</taxon>
        <taxon>Bacillati</taxon>
        <taxon>Bacillota</taxon>
        <taxon>Bacilli</taxon>
        <taxon>Bacillales</taxon>
        <taxon>Listeriaceae</taxon>
        <taxon>Listeria</taxon>
    </lineage>
</organism>
<sequence>MNVFEPRLSSWLENAGDDDDVVLSSRIRLARNLKDEQFPIYDQKEEVVDNIAEVFDDNFTLIKMNQISKLQKALLVEKHLISPYMMNKSEYGAVLLNEEENVSIMLNEEDHLRIQCMTPGLRLFDALEAALQIDGYVEEKLTYAFDKQFGYLTSCVTNIGTGMRASVMVHLPGLVTTKRIKSVIEAIRSLGFVVRGIYGEGSMPASSIFQVSNQVTLGKTETEIVEDLTQVMEQIIMQERVARTTLKQKFHIALEDRVFRSYGLLMNCRIISMQEASDAISDIRLGVELGFFEHISRQKMNELVLFSQPAFLRKEAGRDMDELEEKVIRAKVIREILGDK</sequence>